<gene>
    <name evidence="1" type="primary">argP</name>
    <name type="synonym">iciA</name>
    <name type="ordered locus">SG2959</name>
</gene>
<protein>
    <recommendedName>
        <fullName evidence="1">HTH-type transcriptional regulator ArgP</fullName>
    </recommendedName>
</protein>
<organism>
    <name type="scientific">Salmonella gallinarum (strain 287/91 / NCTC 13346)</name>
    <dbReference type="NCBI Taxonomy" id="550538"/>
    <lineage>
        <taxon>Bacteria</taxon>
        <taxon>Pseudomonadati</taxon>
        <taxon>Pseudomonadota</taxon>
        <taxon>Gammaproteobacteria</taxon>
        <taxon>Enterobacterales</taxon>
        <taxon>Enterobacteriaceae</taxon>
        <taxon>Salmonella</taxon>
    </lineage>
</organism>
<sequence length="297" mass="33537">MKRPDYRTLQALDAVIRERGFERAAQKLCITQSAVSQRIKQLENMFGQPLLVRTVPPRPTEQGQKLLALLRQVELLEEEWLGDEQTGSTPLLLSLAVNADSLATWLLPALAPVLADSPIRLNLQVEDETRTQERLRRGEVVGAVSIQHQALPSCLVDKLGALDYLFVASRPFAERYFPNGVTRSSLLKAPAVAFDHLDDMHQAFLQQNFDLPPGSVPCHIVNSSEAFVQLARQGTTCCMIPHLQIEKELESGELINLTPGLLQRRMLYWHRFAPESRMMRKVTDALLEYGHKVLRQD</sequence>
<comment type="function">
    <text evidence="1">Controls the transcription of genes involved in arginine and lysine metabolism.</text>
</comment>
<comment type="subunit">
    <text evidence="1">Homodimer.</text>
</comment>
<comment type="similarity">
    <text evidence="2">Belongs to the LysR transcriptional regulatory family.</text>
</comment>
<dbReference type="EMBL" id="AM933173">
    <property type="protein sequence ID" value="CAR38764.1"/>
    <property type="molecule type" value="Genomic_DNA"/>
</dbReference>
<dbReference type="RefSeq" id="WP_000828348.1">
    <property type="nucleotide sequence ID" value="NC_011274.1"/>
</dbReference>
<dbReference type="SMR" id="B5RE25"/>
<dbReference type="KEGG" id="seg:SG2959"/>
<dbReference type="HOGENOM" id="CLU_063829_0_0_6"/>
<dbReference type="Proteomes" id="UP000008321">
    <property type="component" value="Chromosome"/>
</dbReference>
<dbReference type="GO" id="GO:0003677">
    <property type="term" value="F:DNA binding"/>
    <property type="evidence" value="ECO:0007669"/>
    <property type="project" value="UniProtKB-UniRule"/>
</dbReference>
<dbReference type="GO" id="GO:0003700">
    <property type="term" value="F:DNA-binding transcription factor activity"/>
    <property type="evidence" value="ECO:0007669"/>
    <property type="project" value="UniProtKB-UniRule"/>
</dbReference>
<dbReference type="CDD" id="cd08428">
    <property type="entry name" value="PBP2_IciA_ArgP"/>
    <property type="match status" value="1"/>
</dbReference>
<dbReference type="FunFam" id="1.10.10.10:FF:000061">
    <property type="entry name" value="HTH-type transcriptional regulator ArgP"/>
    <property type="match status" value="1"/>
</dbReference>
<dbReference type="FunFam" id="3.40.190.290:FF:000002">
    <property type="entry name" value="HTH-type transcriptional regulator ArgP"/>
    <property type="match status" value="1"/>
</dbReference>
<dbReference type="Gene3D" id="3.40.190.290">
    <property type="match status" value="1"/>
</dbReference>
<dbReference type="Gene3D" id="1.10.10.10">
    <property type="entry name" value="Winged helix-like DNA-binding domain superfamily/Winged helix DNA-binding domain"/>
    <property type="match status" value="1"/>
</dbReference>
<dbReference type="HAMAP" id="MF_00513">
    <property type="entry name" value="HTH_type_ArgP"/>
    <property type="match status" value="1"/>
</dbReference>
<dbReference type="InterPro" id="IPR017685">
    <property type="entry name" value="ArgP"/>
</dbReference>
<dbReference type="InterPro" id="IPR023490">
    <property type="entry name" value="ArgP_gammaproteobact"/>
</dbReference>
<dbReference type="InterPro" id="IPR050176">
    <property type="entry name" value="LTTR"/>
</dbReference>
<dbReference type="InterPro" id="IPR005119">
    <property type="entry name" value="LysR_subst-bd"/>
</dbReference>
<dbReference type="InterPro" id="IPR000847">
    <property type="entry name" value="Tscrpt_reg_HTH_LysR"/>
</dbReference>
<dbReference type="InterPro" id="IPR036388">
    <property type="entry name" value="WH-like_DNA-bd_sf"/>
</dbReference>
<dbReference type="InterPro" id="IPR036390">
    <property type="entry name" value="WH_DNA-bd_sf"/>
</dbReference>
<dbReference type="NCBIfam" id="TIGR03298">
    <property type="entry name" value="argP"/>
    <property type="match status" value="1"/>
</dbReference>
<dbReference type="NCBIfam" id="NF002964">
    <property type="entry name" value="PRK03635.1"/>
    <property type="match status" value="1"/>
</dbReference>
<dbReference type="NCBIfam" id="NF009888">
    <property type="entry name" value="PRK13348.1"/>
    <property type="match status" value="1"/>
</dbReference>
<dbReference type="PANTHER" id="PTHR30579:SF2">
    <property type="entry name" value="HTH-TYPE TRANSCRIPTIONAL REGULATOR ARGP"/>
    <property type="match status" value="1"/>
</dbReference>
<dbReference type="PANTHER" id="PTHR30579">
    <property type="entry name" value="TRANSCRIPTIONAL REGULATOR"/>
    <property type="match status" value="1"/>
</dbReference>
<dbReference type="Pfam" id="PF00126">
    <property type="entry name" value="HTH_1"/>
    <property type="match status" value="1"/>
</dbReference>
<dbReference type="Pfam" id="PF03466">
    <property type="entry name" value="LysR_substrate"/>
    <property type="match status" value="1"/>
</dbReference>
<dbReference type="PRINTS" id="PR00039">
    <property type="entry name" value="HTHLYSR"/>
</dbReference>
<dbReference type="SUPFAM" id="SSF53850">
    <property type="entry name" value="Periplasmic binding protein-like II"/>
    <property type="match status" value="1"/>
</dbReference>
<dbReference type="SUPFAM" id="SSF46785">
    <property type="entry name" value="Winged helix' DNA-binding domain"/>
    <property type="match status" value="1"/>
</dbReference>
<dbReference type="PROSITE" id="PS50931">
    <property type="entry name" value="HTH_LYSR"/>
    <property type="match status" value="1"/>
</dbReference>
<accession>B5RE25</accession>
<feature type="chain" id="PRO_1000127281" description="HTH-type transcriptional regulator ArgP">
    <location>
        <begin position="1"/>
        <end position="297"/>
    </location>
</feature>
<feature type="domain" description="HTH lysR-type" evidence="1">
    <location>
        <begin position="4"/>
        <end position="60"/>
    </location>
</feature>
<feature type="DNA-binding region" description="H-T-H motif" evidence="1">
    <location>
        <begin position="21"/>
        <end position="40"/>
    </location>
</feature>
<proteinExistence type="inferred from homology"/>
<evidence type="ECO:0000255" key="1">
    <source>
        <dbReference type="HAMAP-Rule" id="MF_00513"/>
    </source>
</evidence>
<evidence type="ECO:0000305" key="2"/>
<reference key="1">
    <citation type="journal article" date="2008" name="Genome Res.">
        <title>Comparative genome analysis of Salmonella enteritidis PT4 and Salmonella gallinarum 287/91 provides insights into evolutionary and host adaptation pathways.</title>
        <authorList>
            <person name="Thomson N.R."/>
            <person name="Clayton D.J."/>
            <person name="Windhorst D."/>
            <person name="Vernikos G."/>
            <person name="Davidson S."/>
            <person name="Churcher C."/>
            <person name="Quail M.A."/>
            <person name="Stevens M."/>
            <person name="Jones M.A."/>
            <person name="Watson M."/>
            <person name="Barron A."/>
            <person name="Layton A."/>
            <person name="Pickard D."/>
            <person name="Kingsley R.A."/>
            <person name="Bignell A."/>
            <person name="Clark L."/>
            <person name="Harris B."/>
            <person name="Ormond D."/>
            <person name="Abdellah Z."/>
            <person name="Brooks K."/>
            <person name="Cherevach I."/>
            <person name="Chillingworth T."/>
            <person name="Woodward J."/>
            <person name="Norberczak H."/>
            <person name="Lord A."/>
            <person name="Arrowsmith C."/>
            <person name="Jagels K."/>
            <person name="Moule S."/>
            <person name="Mungall K."/>
            <person name="Saunders M."/>
            <person name="Whitehead S."/>
            <person name="Chabalgoity J.A."/>
            <person name="Maskell D."/>
            <person name="Humphreys T."/>
            <person name="Roberts M."/>
            <person name="Barrow P.A."/>
            <person name="Dougan G."/>
            <person name="Parkhill J."/>
        </authorList>
    </citation>
    <scope>NUCLEOTIDE SEQUENCE [LARGE SCALE GENOMIC DNA]</scope>
    <source>
        <strain>287/91 / NCTC 13346</strain>
    </source>
</reference>
<keyword id="KW-0238">DNA-binding</keyword>
<keyword id="KW-0804">Transcription</keyword>
<keyword id="KW-0805">Transcription regulation</keyword>
<name>ARGP_SALG2</name>